<evidence type="ECO:0000250" key="1"/>
<evidence type="ECO:0000255" key="2">
    <source>
        <dbReference type="PROSITE-ProRule" id="PRU00408"/>
    </source>
</evidence>
<evidence type="ECO:0000256" key="3">
    <source>
        <dbReference type="SAM" id="MobiDB-lite"/>
    </source>
</evidence>
<evidence type="ECO:0000305" key="4"/>
<evidence type="ECO:0007829" key="5">
    <source>
        <dbReference type="PDB" id="1JL2"/>
    </source>
</evidence>
<evidence type="ECO:0007829" key="6">
    <source>
        <dbReference type="PDB" id="1RIL"/>
    </source>
</evidence>
<evidence type="ECO:0007829" key="7">
    <source>
        <dbReference type="PDB" id="2RPI"/>
    </source>
</evidence>
<comment type="function">
    <text>Endonuclease that specifically degrades the RNA of RNA-DNA hybrids.</text>
</comment>
<comment type="catalytic activity">
    <reaction>
        <text>Endonucleolytic cleavage to 5'-phosphomonoester.</text>
        <dbReference type="EC" id="3.1.26.4"/>
    </reaction>
</comment>
<comment type="cofactor">
    <cofactor>
        <name>Mg(2+)</name>
        <dbReference type="ChEBI" id="CHEBI:18420"/>
    </cofactor>
    <text>Binds 1 Mg(2+) ion per subunit. May bind a second metal ion at a regulatory site, or after substrate binding.</text>
</comment>
<comment type="subunit">
    <text>Monomer.</text>
</comment>
<comment type="similarity">
    <text evidence="4">Belongs to the RNase H family.</text>
</comment>
<dbReference type="EC" id="3.1.26.4"/>
<dbReference type="EMBL" id="X60507">
    <property type="protein sequence ID" value="CAA43026.1"/>
    <property type="molecule type" value="Genomic_DNA"/>
</dbReference>
<dbReference type="EMBL" id="AP008226">
    <property type="protein sequence ID" value="BAD71379.1"/>
    <property type="molecule type" value="Genomic_DNA"/>
</dbReference>
<dbReference type="RefSeq" id="WP_011228761.1">
    <property type="nucleotide sequence ID" value="NC_006461.1"/>
</dbReference>
<dbReference type="RefSeq" id="YP_144822.1">
    <property type="nucleotide sequence ID" value="NC_006461.1"/>
</dbReference>
<dbReference type="PDB" id="1JL2">
    <property type="method" value="X-ray"/>
    <property type="resolution" value="1.76 A"/>
    <property type="chains" value="A/B/C/D=46-129"/>
</dbReference>
<dbReference type="PDB" id="1RIL">
    <property type="method" value="X-ray"/>
    <property type="resolution" value="2.80 A"/>
    <property type="chains" value="A=1-166"/>
</dbReference>
<dbReference type="PDB" id="2RPI">
    <property type="method" value="NMR"/>
    <property type="chains" value="A=1-127"/>
</dbReference>
<dbReference type="PDBsum" id="1JL2"/>
<dbReference type="PDBsum" id="1RIL"/>
<dbReference type="PDBsum" id="2RPI"/>
<dbReference type="BMRB" id="P29253"/>
<dbReference type="SMR" id="P29253"/>
<dbReference type="EnsemblBacteria" id="BAD71379">
    <property type="protein sequence ID" value="BAD71379"/>
    <property type="gene ID" value="BAD71379"/>
</dbReference>
<dbReference type="GeneID" id="3168213"/>
<dbReference type="KEGG" id="ttj:TTHA1556"/>
<dbReference type="PATRIC" id="fig|300852.9.peg.1527"/>
<dbReference type="eggNOG" id="COG0328">
    <property type="taxonomic scope" value="Bacteria"/>
</dbReference>
<dbReference type="HOGENOM" id="CLU_030894_6_2_0"/>
<dbReference type="PhylomeDB" id="P29253"/>
<dbReference type="BRENDA" id="3.1.26.4">
    <property type="organism ID" value="2305"/>
</dbReference>
<dbReference type="EvolutionaryTrace" id="P29253"/>
<dbReference type="Proteomes" id="UP000000532">
    <property type="component" value="Chromosome"/>
</dbReference>
<dbReference type="GO" id="GO:0005737">
    <property type="term" value="C:cytoplasm"/>
    <property type="evidence" value="ECO:0007669"/>
    <property type="project" value="UniProtKB-UniRule"/>
</dbReference>
<dbReference type="GO" id="GO:0000287">
    <property type="term" value="F:magnesium ion binding"/>
    <property type="evidence" value="ECO:0007669"/>
    <property type="project" value="UniProtKB-UniRule"/>
</dbReference>
<dbReference type="GO" id="GO:0003676">
    <property type="term" value="F:nucleic acid binding"/>
    <property type="evidence" value="ECO:0007669"/>
    <property type="project" value="InterPro"/>
</dbReference>
<dbReference type="GO" id="GO:0004523">
    <property type="term" value="F:RNA-DNA hybrid ribonuclease activity"/>
    <property type="evidence" value="ECO:0007669"/>
    <property type="project" value="UniProtKB-UniRule"/>
</dbReference>
<dbReference type="GO" id="GO:0043137">
    <property type="term" value="P:DNA replication, removal of RNA primer"/>
    <property type="evidence" value="ECO:0007669"/>
    <property type="project" value="TreeGrafter"/>
</dbReference>
<dbReference type="CDD" id="cd09278">
    <property type="entry name" value="RNase_HI_prokaryote_like"/>
    <property type="match status" value="1"/>
</dbReference>
<dbReference type="FunFam" id="3.30.420.10:FF:000089">
    <property type="entry name" value="Ribonuclease H"/>
    <property type="match status" value="1"/>
</dbReference>
<dbReference type="Gene3D" id="3.30.420.10">
    <property type="entry name" value="Ribonuclease H-like superfamily/Ribonuclease H"/>
    <property type="match status" value="1"/>
</dbReference>
<dbReference type="HAMAP" id="MF_00042">
    <property type="entry name" value="RNase_H"/>
    <property type="match status" value="1"/>
</dbReference>
<dbReference type="InterPro" id="IPR050092">
    <property type="entry name" value="RNase_H"/>
</dbReference>
<dbReference type="InterPro" id="IPR012337">
    <property type="entry name" value="RNaseH-like_sf"/>
</dbReference>
<dbReference type="InterPro" id="IPR002156">
    <property type="entry name" value="RNaseH_domain"/>
</dbReference>
<dbReference type="InterPro" id="IPR036397">
    <property type="entry name" value="RNaseH_sf"/>
</dbReference>
<dbReference type="InterPro" id="IPR022892">
    <property type="entry name" value="RNaseHI"/>
</dbReference>
<dbReference type="NCBIfam" id="NF001236">
    <property type="entry name" value="PRK00203.1"/>
    <property type="match status" value="1"/>
</dbReference>
<dbReference type="PANTHER" id="PTHR10642">
    <property type="entry name" value="RIBONUCLEASE H1"/>
    <property type="match status" value="1"/>
</dbReference>
<dbReference type="PANTHER" id="PTHR10642:SF26">
    <property type="entry name" value="RIBONUCLEASE H1"/>
    <property type="match status" value="1"/>
</dbReference>
<dbReference type="Pfam" id="PF00075">
    <property type="entry name" value="RNase_H"/>
    <property type="match status" value="1"/>
</dbReference>
<dbReference type="SUPFAM" id="SSF53098">
    <property type="entry name" value="Ribonuclease H-like"/>
    <property type="match status" value="1"/>
</dbReference>
<dbReference type="PROSITE" id="PS50879">
    <property type="entry name" value="RNASE_H_1"/>
    <property type="match status" value="1"/>
</dbReference>
<sequence>MNPSPRKRVALFTDGACLGNPGPGGWAALLRFHAHEKLLSGGEACTTNNRMELKAAIEGLKALKEPCEVDLYTDSHYLKKAFTEGWLEGWRKRGWRTAEGKPVKNRDLWEALLLAMAPHRVRFHFVKGHTGHPENERVDREARRQAQSQAKTPCPPRAPTLFHEEA</sequence>
<keyword id="KW-0002">3D-structure</keyword>
<keyword id="KW-0903">Direct protein sequencing</keyword>
<keyword id="KW-0255">Endonuclease</keyword>
<keyword id="KW-0378">Hydrolase</keyword>
<keyword id="KW-0460">Magnesium</keyword>
<keyword id="KW-0479">Metal-binding</keyword>
<keyword id="KW-0540">Nuclease</keyword>
<keyword id="KW-1185">Reference proteome</keyword>
<proteinExistence type="evidence at protein level"/>
<name>RNH_THET8</name>
<gene>
    <name type="primary">rnhA</name>
    <name type="ordered locus">TTHA1556</name>
</gene>
<protein>
    <recommendedName>
        <fullName>Ribonuclease H</fullName>
        <shortName>RNase H</shortName>
        <ecNumber>3.1.26.4</ecNumber>
    </recommendedName>
</protein>
<accession>P29253</accession>
<accession>Q5SI24</accession>
<feature type="chain" id="PRO_0000195410" description="Ribonuclease H">
    <location>
        <begin position="1"/>
        <end position="166"/>
    </location>
</feature>
<feature type="domain" description="RNase H type-1" evidence="2">
    <location>
        <begin position="5"/>
        <end position="147"/>
    </location>
</feature>
<feature type="region of interest" description="Disordered" evidence="3">
    <location>
        <begin position="128"/>
        <end position="166"/>
    </location>
</feature>
<feature type="compositionally biased region" description="Basic and acidic residues" evidence="3">
    <location>
        <begin position="131"/>
        <end position="144"/>
    </location>
</feature>
<feature type="binding site" evidence="1">
    <location>
        <position position="14"/>
    </location>
    <ligand>
        <name>Mg(2+)</name>
        <dbReference type="ChEBI" id="CHEBI:18420"/>
        <label>1</label>
    </ligand>
</feature>
<feature type="binding site" evidence="1">
    <location>
        <position position="14"/>
    </location>
    <ligand>
        <name>Mg(2+)</name>
        <dbReference type="ChEBI" id="CHEBI:18420"/>
        <label>2</label>
    </ligand>
</feature>
<feature type="binding site" evidence="1">
    <location>
        <position position="52"/>
    </location>
    <ligand>
        <name>Mg(2+)</name>
        <dbReference type="ChEBI" id="CHEBI:18420"/>
        <label>1</label>
    </ligand>
</feature>
<feature type="binding site" evidence="1">
    <location>
        <position position="74"/>
    </location>
    <ligand>
        <name>Mg(2+)</name>
        <dbReference type="ChEBI" id="CHEBI:18420"/>
        <label>1</label>
    </ligand>
</feature>
<feature type="binding site" evidence="1">
    <location>
        <position position="139"/>
    </location>
    <ligand>
        <name>Mg(2+)</name>
        <dbReference type="ChEBI" id="CHEBI:18420"/>
        <label>2</label>
    </ligand>
</feature>
<feature type="sequence conflict" description="In Ref. 1; CAA43026." evidence="4" ref="1">
    <original>C</original>
    <variation>W</variation>
    <location>
        <position position="45"/>
    </location>
</feature>
<feature type="strand" evidence="7">
    <location>
        <begin position="4"/>
        <end position="6"/>
    </location>
</feature>
<feature type="strand" evidence="6">
    <location>
        <begin position="11"/>
        <end position="19"/>
    </location>
</feature>
<feature type="strand" evidence="6">
    <location>
        <begin position="22"/>
        <end position="30"/>
    </location>
</feature>
<feature type="strand" evidence="6">
    <location>
        <begin position="42"/>
        <end position="46"/>
    </location>
</feature>
<feature type="helix" evidence="5">
    <location>
        <begin position="54"/>
        <end position="61"/>
    </location>
</feature>
<feature type="strand" evidence="5">
    <location>
        <begin position="68"/>
        <end position="73"/>
    </location>
</feature>
<feature type="helix" evidence="5">
    <location>
        <begin position="76"/>
        <end position="83"/>
    </location>
</feature>
<feature type="helix" evidence="5">
    <location>
        <begin position="86"/>
        <end position="92"/>
    </location>
</feature>
<feature type="turn" evidence="5">
    <location>
        <begin position="93"/>
        <end position="95"/>
    </location>
</feature>
<feature type="strand" evidence="5">
    <location>
        <begin position="100"/>
        <end position="102"/>
    </location>
</feature>
<feature type="helix" evidence="5">
    <location>
        <begin position="106"/>
        <end position="116"/>
    </location>
</feature>
<feature type="strand" evidence="5">
    <location>
        <begin position="119"/>
        <end position="125"/>
    </location>
</feature>
<feature type="helix" evidence="6">
    <location>
        <begin position="128"/>
        <end position="130"/>
    </location>
</feature>
<feature type="helix" evidence="6">
    <location>
        <begin position="134"/>
        <end position="146"/>
    </location>
</feature>
<reference key="1">
    <citation type="journal article" date="1991" name="Nucleic Acids Res.">
        <title>Molecular cloning of a ribonuclease H (RNase HI) gene from an extreme thermophile Thermus thermophilus HB8: a thermostable RNase H can functionally replace the Escherichia coli enzyme in vivo.</title>
        <authorList>
            <person name="Itaya M."/>
            <person name="Kondo K."/>
        </authorList>
    </citation>
    <scope>NUCLEOTIDE SEQUENCE [GENOMIC DNA]</scope>
</reference>
<reference key="2">
    <citation type="submission" date="2004-11" db="EMBL/GenBank/DDBJ databases">
        <title>Complete genome sequence of Thermus thermophilus HB8.</title>
        <authorList>
            <person name="Masui R."/>
            <person name="Kurokawa K."/>
            <person name="Nakagawa N."/>
            <person name="Tokunaga F."/>
            <person name="Koyama Y."/>
            <person name="Shibata T."/>
            <person name="Oshima T."/>
            <person name="Yokoyama S."/>
            <person name="Yasunaga T."/>
            <person name="Kuramitsu S."/>
        </authorList>
    </citation>
    <scope>NUCLEOTIDE SEQUENCE [LARGE SCALE GENOMIC DNA]</scope>
    <source>
        <strain>ATCC 27634 / DSM 579 / HB8</strain>
    </source>
</reference>
<reference key="3">
    <citation type="journal article" date="1992" name="J. Biol. Chem.">
        <title>Expression, purification, and characterization of a recombinant ribonuclease H from Thermus thermophilus HB8.</title>
        <authorList>
            <person name="Kanaya S."/>
            <person name="Itaya M."/>
        </authorList>
    </citation>
    <scope>PARTIAL PROTEIN SEQUENCE</scope>
    <scope>SEQUENCE REVISION</scope>
    <scope>CHARACTERIZATION</scope>
</reference>
<reference key="4">
    <citation type="journal article" date="1993" name="J. Mol. Biol.">
        <title>Crystal structure of ribonuclease H from Thermus thermophilus HB8 refined at 2.8-A resolution.</title>
        <authorList>
            <person name="Ishikawa K."/>
            <person name="Okumura M."/>
            <person name="Katayanagi K."/>
            <person name="Kimura S."/>
            <person name="Kanaya S."/>
            <person name="Nakamura H."/>
            <person name="Morikawa K."/>
        </authorList>
    </citation>
    <scope>X-RAY CRYSTALLOGRAPHY (2.8 ANGSTROMS)</scope>
</reference>
<organism>
    <name type="scientific">Thermus thermophilus (strain ATCC 27634 / DSM 579 / HB8)</name>
    <dbReference type="NCBI Taxonomy" id="300852"/>
    <lineage>
        <taxon>Bacteria</taxon>
        <taxon>Thermotogati</taxon>
        <taxon>Deinococcota</taxon>
        <taxon>Deinococci</taxon>
        <taxon>Thermales</taxon>
        <taxon>Thermaceae</taxon>
        <taxon>Thermus</taxon>
    </lineage>
</organism>